<dbReference type="EC" id="3.6.1.9" evidence="1"/>
<dbReference type="EMBL" id="BX897700">
    <property type="protein sequence ID" value="CAF26580.1"/>
    <property type="molecule type" value="Genomic_DNA"/>
</dbReference>
<dbReference type="RefSeq" id="WP_011179773.1">
    <property type="nucleotide sequence ID" value="NC_005955.1"/>
</dbReference>
<dbReference type="SMR" id="Q6G132"/>
<dbReference type="KEGG" id="bqu:BQ11190"/>
<dbReference type="eggNOG" id="COG0424">
    <property type="taxonomic scope" value="Bacteria"/>
</dbReference>
<dbReference type="HOGENOM" id="CLU_040416_2_0_5"/>
<dbReference type="OrthoDB" id="9807767at2"/>
<dbReference type="Proteomes" id="UP000000597">
    <property type="component" value="Chromosome"/>
</dbReference>
<dbReference type="GO" id="GO:0005737">
    <property type="term" value="C:cytoplasm"/>
    <property type="evidence" value="ECO:0007669"/>
    <property type="project" value="UniProtKB-SubCell"/>
</dbReference>
<dbReference type="GO" id="GO:0036218">
    <property type="term" value="F:dTTP diphosphatase activity"/>
    <property type="evidence" value="ECO:0007669"/>
    <property type="project" value="RHEA"/>
</dbReference>
<dbReference type="GO" id="GO:0036221">
    <property type="term" value="F:UTP diphosphatase activity"/>
    <property type="evidence" value="ECO:0007669"/>
    <property type="project" value="RHEA"/>
</dbReference>
<dbReference type="GO" id="GO:0009117">
    <property type="term" value="P:nucleotide metabolic process"/>
    <property type="evidence" value="ECO:0007669"/>
    <property type="project" value="UniProtKB-KW"/>
</dbReference>
<dbReference type="CDD" id="cd00555">
    <property type="entry name" value="Maf"/>
    <property type="match status" value="1"/>
</dbReference>
<dbReference type="Gene3D" id="3.90.950.10">
    <property type="match status" value="1"/>
</dbReference>
<dbReference type="HAMAP" id="MF_00528">
    <property type="entry name" value="Maf"/>
    <property type="match status" value="1"/>
</dbReference>
<dbReference type="InterPro" id="IPR029001">
    <property type="entry name" value="ITPase-like_fam"/>
</dbReference>
<dbReference type="InterPro" id="IPR003697">
    <property type="entry name" value="Maf-like"/>
</dbReference>
<dbReference type="NCBIfam" id="TIGR00172">
    <property type="entry name" value="maf"/>
    <property type="match status" value="1"/>
</dbReference>
<dbReference type="PANTHER" id="PTHR43213">
    <property type="entry name" value="BIFUNCTIONAL DTTP/UTP PYROPHOSPHATASE/METHYLTRANSFERASE PROTEIN-RELATED"/>
    <property type="match status" value="1"/>
</dbReference>
<dbReference type="PANTHER" id="PTHR43213:SF5">
    <property type="entry name" value="BIFUNCTIONAL DTTP_UTP PYROPHOSPHATASE_METHYLTRANSFERASE PROTEIN-RELATED"/>
    <property type="match status" value="1"/>
</dbReference>
<dbReference type="Pfam" id="PF02545">
    <property type="entry name" value="Maf"/>
    <property type="match status" value="1"/>
</dbReference>
<dbReference type="PIRSF" id="PIRSF006305">
    <property type="entry name" value="Maf"/>
    <property type="match status" value="1"/>
</dbReference>
<dbReference type="SUPFAM" id="SSF52972">
    <property type="entry name" value="ITPase-like"/>
    <property type="match status" value="1"/>
</dbReference>
<proteinExistence type="inferred from homology"/>
<protein>
    <recommendedName>
        <fullName evidence="1">dTTP/UTP pyrophosphatase</fullName>
        <shortName evidence="1">dTTPase/UTPase</shortName>
        <ecNumber evidence="1">3.6.1.9</ecNumber>
    </recommendedName>
    <alternativeName>
        <fullName evidence="1">Nucleoside triphosphate pyrophosphatase</fullName>
    </alternativeName>
    <alternativeName>
        <fullName evidence="1">Nucleotide pyrophosphatase</fullName>
        <shortName evidence="1">Nucleotide PPase</shortName>
    </alternativeName>
</protein>
<name>NTPPA_BARQU</name>
<comment type="function">
    <text evidence="1">Nucleoside triphosphate pyrophosphatase that hydrolyzes dTTP and UTP. May have a dual role in cell division arrest and in preventing the incorporation of modified nucleotides into cellular nucleic acids.</text>
</comment>
<comment type="catalytic activity">
    <reaction evidence="1">
        <text>dTTP + H2O = dTMP + diphosphate + H(+)</text>
        <dbReference type="Rhea" id="RHEA:28534"/>
        <dbReference type="ChEBI" id="CHEBI:15377"/>
        <dbReference type="ChEBI" id="CHEBI:15378"/>
        <dbReference type="ChEBI" id="CHEBI:33019"/>
        <dbReference type="ChEBI" id="CHEBI:37568"/>
        <dbReference type="ChEBI" id="CHEBI:63528"/>
        <dbReference type="EC" id="3.6.1.9"/>
    </reaction>
</comment>
<comment type="catalytic activity">
    <reaction evidence="1">
        <text>UTP + H2O = UMP + diphosphate + H(+)</text>
        <dbReference type="Rhea" id="RHEA:29395"/>
        <dbReference type="ChEBI" id="CHEBI:15377"/>
        <dbReference type="ChEBI" id="CHEBI:15378"/>
        <dbReference type="ChEBI" id="CHEBI:33019"/>
        <dbReference type="ChEBI" id="CHEBI:46398"/>
        <dbReference type="ChEBI" id="CHEBI:57865"/>
        <dbReference type="EC" id="3.6.1.9"/>
    </reaction>
</comment>
<comment type="cofactor">
    <cofactor evidence="1">
        <name>a divalent metal cation</name>
        <dbReference type="ChEBI" id="CHEBI:60240"/>
    </cofactor>
</comment>
<comment type="subcellular location">
    <subcellularLocation>
        <location evidence="1">Cytoplasm</location>
    </subcellularLocation>
</comment>
<comment type="similarity">
    <text evidence="1">Belongs to the Maf family. YhdE subfamily.</text>
</comment>
<gene>
    <name type="ordered locus">BQ11190</name>
</gene>
<sequence>MGNIRETFFKKTCSEEIQLVLASASPRRLALLAQIGLDPHQVYATNIDETPKLREHPANLAKRLAKEKALKAQETFLWCNQNGKSNASAQKIVILAADTVVAVGRVILPKPESEDQAYECLRFLSGRSHKVYGAVCALNECGKITVKLVESRVRFRRLTSSLMEAYLNSGEWEGKAGGYAIQGKASAFVVHIAGSYSNVVGLPLAETMDLLTAYQYPLLSNWVAKTL</sequence>
<accession>Q6G132</accession>
<evidence type="ECO:0000255" key="1">
    <source>
        <dbReference type="HAMAP-Rule" id="MF_00528"/>
    </source>
</evidence>
<keyword id="KW-0963">Cytoplasm</keyword>
<keyword id="KW-0378">Hydrolase</keyword>
<keyword id="KW-0546">Nucleotide metabolism</keyword>
<reference key="1">
    <citation type="journal article" date="2004" name="Proc. Natl. Acad. Sci. U.S.A.">
        <title>The louse-borne human pathogen Bartonella quintana is a genomic derivative of the zoonotic agent Bartonella henselae.</title>
        <authorList>
            <person name="Alsmark U.C.M."/>
            <person name="Frank A.C."/>
            <person name="Karlberg E.O."/>
            <person name="Legault B.-A."/>
            <person name="Ardell D.H."/>
            <person name="Canbaeck B."/>
            <person name="Eriksson A.-S."/>
            <person name="Naeslund A.K."/>
            <person name="Handley S.A."/>
            <person name="Huvet M."/>
            <person name="La Scola B."/>
            <person name="Holmberg M."/>
            <person name="Andersson S.G.E."/>
        </authorList>
    </citation>
    <scope>NUCLEOTIDE SEQUENCE [LARGE SCALE GENOMIC DNA]</scope>
    <source>
        <strain>Toulouse</strain>
    </source>
</reference>
<feature type="chain" id="PRO_0000267253" description="dTTP/UTP pyrophosphatase">
    <location>
        <begin position="1"/>
        <end position="227"/>
    </location>
</feature>
<feature type="active site" description="Proton acceptor" evidence="1">
    <location>
        <position position="98"/>
    </location>
</feature>
<feature type="site" description="Important for substrate specificity" evidence="1">
    <location>
        <position position="27"/>
    </location>
</feature>
<feature type="site" description="Important for substrate specificity" evidence="1">
    <location>
        <position position="99"/>
    </location>
</feature>
<feature type="site" description="Important for substrate specificity" evidence="1">
    <location>
        <position position="182"/>
    </location>
</feature>
<organism>
    <name type="scientific">Bartonella quintana (strain Toulouse)</name>
    <name type="common">Rochalimaea quintana</name>
    <dbReference type="NCBI Taxonomy" id="283165"/>
    <lineage>
        <taxon>Bacteria</taxon>
        <taxon>Pseudomonadati</taxon>
        <taxon>Pseudomonadota</taxon>
        <taxon>Alphaproteobacteria</taxon>
        <taxon>Hyphomicrobiales</taxon>
        <taxon>Bartonellaceae</taxon>
        <taxon>Bartonella</taxon>
    </lineage>
</organism>